<reference key="1">
    <citation type="journal article" date="2007" name="J. Bacteriol.">
        <title>The complete genome sequence of Roseobacter denitrificans reveals a mixotrophic rather than photosynthetic metabolism.</title>
        <authorList>
            <person name="Swingley W.D."/>
            <person name="Sadekar S."/>
            <person name="Mastrian S.D."/>
            <person name="Matthies H.J."/>
            <person name="Hao J."/>
            <person name="Ramos H."/>
            <person name="Acharya C.R."/>
            <person name="Conrad A.L."/>
            <person name="Taylor H.L."/>
            <person name="Dejesa L.C."/>
            <person name="Shah M.K."/>
            <person name="O'Huallachain M.E."/>
            <person name="Lince M.T."/>
            <person name="Blankenship R.E."/>
            <person name="Beatty J.T."/>
            <person name="Touchman J.W."/>
        </authorList>
    </citation>
    <scope>NUCLEOTIDE SEQUENCE [LARGE SCALE GENOMIC DNA]</scope>
    <source>
        <strain>ATCC 33942 / OCh 114</strain>
    </source>
</reference>
<evidence type="ECO:0000255" key="1">
    <source>
        <dbReference type="HAMAP-Rule" id="MF_00711"/>
    </source>
</evidence>
<gene>
    <name evidence="1" type="primary">gcvP</name>
    <name type="ordered locus">RD1_1225</name>
</gene>
<sequence length="949" mass="103442">MSFKPIDYLPYDFANRRHIGPSPAEMTQMLEVTGAANLDALMDDTLPAAIRQKEPLAFGKAMSEREVLEHLRRVASKNQVLTSLIGQGYYGTVTPPAIQRNILENPAWYTAYTPYQPEISQGRLEALLNFQTMVSDLTGLEVANASLLDEATACAEAMTMAQRVSKSKSKAFFVDRDCHPQNIAVMQTRAAPLGIEIIVGNPDKMDAEAVFGAIFQYPGTYGHVNDFTDHMAALHAHKAIGIVSADPLALTLLKEPGAMGADIAVGSTQRFGVPEGYGGPHAAYMACRDAYKRAMPGRIVGVSVDSHGHRAYRLSLQTREQHIRREKATSNVCTAQALLAVMASMYAVFHGPEGLRAIAQRIHRKAVRLAKGLEEAGFTVDPQAFFDTITVDVGPLQAAVMKSAVDEGINLRRVGETRVGISLNERCRPDTLEAVWRAFGITRADNDFRPDYRFPEEMLRTSDYLTHPIFHMNRAETEMMRYMRRLSDRDLALDRAMIPLGSCTMKLNSAAEMMPVSWRDFSLLHPFAPVDQAKGYTEMIDDLSAKLCQITGYDQISMQPNSGAQGEYAGLLSIAGYHRANGEAHRNICLIPMSAHGTNPASAQMVGWTVVPIKSADNGDIDMADFAAKAEQHAANLAGCMITYPSTHGVFEETVTEVTRITHQHGGQVYIDGANMNAMVGLSRPGDLGGDVSHLNLHKTFCIPHGGGGPGMGPIGVKSHLAPFLPGHEMTGGGEGAVSAAPFGSPSLLPISWAYCLMMGGDGLTQATRVAILNANYIAKRLEGAFDVLYRGPTGRVAHECVIDVRPFEKSAGVSVEDIAKRLIDCGFHAPTMSWPVAGTLMVEPTESETKAELDRFCDAMLAIRAEIADIEEGRMDAANNPLKNAPHTVDDLVSDWDRPYSRDQGCFPPGAFRVDKYWPPVNRVDNVFGDRHLVCTCPPMEDYAEAAE</sequence>
<keyword id="KW-0560">Oxidoreductase</keyword>
<keyword id="KW-0663">Pyridoxal phosphate</keyword>
<keyword id="KW-1185">Reference proteome</keyword>
<feature type="chain" id="PRO_1000045604" description="Glycine dehydrogenase (decarboxylating)">
    <location>
        <begin position="1"/>
        <end position="949"/>
    </location>
</feature>
<feature type="modified residue" description="N6-(pyridoxal phosphate)lysine" evidence="1">
    <location>
        <position position="699"/>
    </location>
</feature>
<proteinExistence type="inferred from homology"/>
<organism>
    <name type="scientific">Roseobacter denitrificans (strain ATCC 33942 / OCh 114)</name>
    <name type="common">Erythrobacter sp. (strain OCh 114)</name>
    <name type="synonym">Roseobacter denitrificans</name>
    <dbReference type="NCBI Taxonomy" id="375451"/>
    <lineage>
        <taxon>Bacteria</taxon>
        <taxon>Pseudomonadati</taxon>
        <taxon>Pseudomonadota</taxon>
        <taxon>Alphaproteobacteria</taxon>
        <taxon>Rhodobacterales</taxon>
        <taxon>Roseobacteraceae</taxon>
        <taxon>Roseobacter</taxon>
    </lineage>
</organism>
<dbReference type="EC" id="1.4.4.2" evidence="1"/>
<dbReference type="EMBL" id="CP000362">
    <property type="protein sequence ID" value="ABG30873.1"/>
    <property type="molecule type" value="Genomic_DNA"/>
</dbReference>
<dbReference type="RefSeq" id="WP_011567493.1">
    <property type="nucleotide sequence ID" value="NC_008209.1"/>
</dbReference>
<dbReference type="SMR" id="Q16AX0"/>
<dbReference type="STRING" id="375451.RD1_1225"/>
<dbReference type="KEGG" id="rde:RD1_1225"/>
<dbReference type="eggNOG" id="COG0403">
    <property type="taxonomic scope" value="Bacteria"/>
</dbReference>
<dbReference type="eggNOG" id="COG1003">
    <property type="taxonomic scope" value="Bacteria"/>
</dbReference>
<dbReference type="HOGENOM" id="CLU_004620_3_2_5"/>
<dbReference type="OrthoDB" id="9801272at2"/>
<dbReference type="Proteomes" id="UP000007029">
    <property type="component" value="Chromosome"/>
</dbReference>
<dbReference type="GO" id="GO:0005829">
    <property type="term" value="C:cytosol"/>
    <property type="evidence" value="ECO:0007669"/>
    <property type="project" value="TreeGrafter"/>
</dbReference>
<dbReference type="GO" id="GO:0005960">
    <property type="term" value="C:glycine cleavage complex"/>
    <property type="evidence" value="ECO:0007669"/>
    <property type="project" value="TreeGrafter"/>
</dbReference>
<dbReference type="GO" id="GO:0016594">
    <property type="term" value="F:glycine binding"/>
    <property type="evidence" value="ECO:0007669"/>
    <property type="project" value="TreeGrafter"/>
</dbReference>
<dbReference type="GO" id="GO:0004375">
    <property type="term" value="F:glycine dehydrogenase (decarboxylating) activity"/>
    <property type="evidence" value="ECO:0007669"/>
    <property type="project" value="UniProtKB-EC"/>
</dbReference>
<dbReference type="GO" id="GO:0030170">
    <property type="term" value="F:pyridoxal phosphate binding"/>
    <property type="evidence" value="ECO:0007669"/>
    <property type="project" value="TreeGrafter"/>
</dbReference>
<dbReference type="GO" id="GO:0019464">
    <property type="term" value="P:glycine decarboxylation via glycine cleavage system"/>
    <property type="evidence" value="ECO:0007669"/>
    <property type="project" value="UniProtKB-UniRule"/>
</dbReference>
<dbReference type="CDD" id="cd00613">
    <property type="entry name" value="GDC-P"/>
    <property type="match status" value="2"/>
</dbReference>
<dbReference type="FunFam" id="3.40.640.10:FF:000005">
    <property type="entry name" value="Glycine dehydrogenase (decarboxylating), mitochondrial"/>
    <property type="match status" value="1"/>
</dbReference>
<dbReference type="FunFam" id="3.90.1150.10:FF:000007">
    <property type="entry name" value="Glycine dehydrogenase (decarboxylating), mitochondrial"/>
    <property type="match status" value="1"/>
</dbReference>
<dbReference type="FunFam" id="3.40.640.10:FF:000007">
    <property type="entry name" value="glycine dehydrogenase (Decarboxylating), mitochondrial"/>
    <property type="match status" value="1"/>
</dbReference>
<dbReference type="Gene3D" id="3.90.1150.10">
    <property type="entry name" value="Aspartate Aminotransferase, domain 1"/>
    <property type="match status" value="2"/>
</dbReference>
<dbReference type="Gene3D" id="3.40.640.10">
    <property type="entry name" value="Type I PLP-dependent aspartate aminotransferase-like (Major domain)"/>
    <property type="match status" value="2"/>
</dbReference>
<dbReference type="HAMAP" id="MF_00711">
    <property type="entry name" value="GcvP"/>
    <property type="match status" value="1"/>
</dbReference>
<dbReference type="InterPro" id="IPR003437">
    <property type="entry name" value="GcvP"/>
</dbReference>
<dbReference type="InterPro" id="IPR049316">
    <property type="entry name" value="GDC-P_C"/>
</dbReference>
<dbReference type="InterPro" id="IPR049315">
    <property type="entry name" value="GDC-P_N"/>
</dbReference>
<dbReference type="InterPro" id="IPR020581">
    <property type="entry name" value="GDC_P"/>
</dbReference>
<dbReference type="InterPro" id="IPR015424">
    <property type="entry name" value="PyrdxlP-dep_Trfase"/>
</dbReference>
<dbReference type="InterPro" id="IPR015421">
    <property type="entry name" value="PyrdxlP-dep_Trfase_major"/>
</dbReference>
<dbReference type="InterPro" id="IPR015422">
    <property type="entry name" value="PyrdxlP-dep_Trfase_small"/>
</dbReference>
<dbReference type="NCBIfam" id="TIGR00461">
    <property type="entry name" value="gcvP"/>
    <property type="match status" value="1"/>
</dbReference>
<dbReference type="NCBIfam" id="NF001696">
    <property type="entry name" value="PRK00451.1"/>
    <property type="match status" value="1"/>
</dbReference>
<dbReference type="PANTHER" id="PTHR11773:SF1">
    <property type="entry name" value="GLYCINE DEHYDROGENASE (DECARBOXYLATING), MITOCHONDRIAL"/>
    <property type="match status" value="1"/>
</dbReference>
<dbReference type="PANTHER" id="PTHR11773">
    <property type="entry name" value="GLYCINE DEHYDROGENASE, DECARBOXYLATING"/>
    <property type="match status" value="1"/>
</dbReference>
<dbReference type="Pfam" id="PF21478">
    <property type="entry name" value="GcvP2_C"/>
    <property type="match status" value="1"/>
</dbReference>
<dbReference type="Pfam" id="PF02347">
    <property type="entry name" value="GDC-P"/>
    <property type="match status" value="2"/>
</dbReference>
<dbReference type="SUPFAM" id="SSF53383">
    <property type="entry name" value="PLP-dependent transferases"/>
    <property type="match status" value="2"/>
</dbReference>
<name>GCSP_ROSDO</name>
<accession>Q16AX0</accession>
<protein>
    <recommendedName>
        <fullName evidence="1">Glycine dehydrogenase (decarboxylating)</fullName>
        <ecNumber evidence="1">1.4.4.2</ecNumber>
    </recommendedName>
    <alternativeName>
        <fullName evidence="1">Glycine cleavage system P-protein</fullName>
    </alternativeName>
    <alternativeName>
        <fullName evidence="1">Glycine decarboxylase</fullName>
    </alternativeName>
    <alternativeName>
        <fullName evidence="1">Glycine dehydrogenase (aminomethyl-transferring)</fullName>
    </alternativeName>
</protein>
<comment type="function">
    <text evidence="1">The glycine cleavage system catalyzes the degradation of glycine. The P protein binds the alpha-amino group of glycine through its pyridoxal phosphate cofactor; CO(2) is released and the remaining methylamine moiety is then transferred to the lipoamide cofactor of the H protein.</text>
</comment>
<comment type="catalytic activity">
    <reaction evidence="1">
        <text>N(6)-[(R)-lipoyl]-L-lysyl-[glycine-cleavage complex H protein] + glycine + H(+) = N(6)-[(R)-S(8)-aminomethyldihydrolipoyl]-L-lysyl-[glycine-cleavage complex H protein] + CO2</text>
        <dbReference type="Rhea" id="RHEA:24304"/>
        <dbReference type="Rhea" id="RHEA-COMP:10494"/>
        <dbReference type="Rhea" id="RHEA-COMP:10495"/>
        <dbReference type="ChEBI" id="CHEBI:15378"/>
        <dbReference type="ChEBI" id="CHEBI:16526"/>
        <dbReference type="ChEBI" id="CHEBI:57305"/>
        <dbReference type="ChEBI" id="CHEBI:83099"/>
        <dbReference type="ChEBI" id="CHEBI:83143"/>
        <dbReference type="EC" id="1.4.4.2"/>
    </reaction>
</comment>
<comment type="cofactor">
    <cofactor evidence="1">
        <name>pyridoxal 5'-phosphate</name>
        <dbReference type="ChEBI" id="CHEBI:597326"/>
    </cofactor>
</comment>
<comment type="subunit">
    <text evidence="1">The glycine cleavage system is composed of four proteins: P, T, L and H.</text>
</comment>
<comment type="similarity">
    <text evidence="1">Belongs to the GcvP family.</text>
</comment>